<gene>
    <name evidence="1" type="primary">tatC</name>
    <name type="ordered locus">BPLAN_242</name>
</gene>
<accession>D0J948</accession>
<name>TATC_BLASP</name>
<dbReference type="EMBL" id="CP001429">
    <property type="protein sequence ID" value="ACX83869.1"/>
    <property type="molecule type" value="Genomic_DNA"/>
</dbReference>
<dbReference type="RefSeq" id="WP_012821397.1">
    <property type="nucleotide sequence ID" value="NC_013418.2"/>
</dbReference>
<dbReference type="SMR" id="D0J948"/>
<dbReference type="STRING" id="600809.BPLAN_242"/>
<dbReference type="KEGG" id="bpi:BPLAN_242"/>
<dbReference type="eggNOG" id="COG0805">
    <property type="taxonomic scope" value="Bacteria"/>
</dbReference>
<dbReference type="HOGENOM" id="CLU_031942_3_2_10"/>
<dbReference type="OrthoDB" id="9777044at2"/>
<dbReference type="Proteomes" id="UP000002225">
    <property type="component" value="Chromosome"/>
</dbReference>
<dbReference type="GO" id="GO:0033281">
    <property type="term" value="C:TAT protein transport complex"/>
    <property type="evidence" value="ECO:0007669"/>
    <property type="project" value="UniProtKB-UniRule"/>
</dbReference>
<dbReference type="GO" id="GO:0009977">
    <property type="term" value="F:proton motive force dependent protein transmembrane transporter activity"/>
    <property type="evidence" value="ECO:0007669"/>
    <property type="project" value="TreeGrafter"/>
</dbReference>
<dbReference type="GO" id="GO:0065002">
    <property type="term" value="P:intracellular protein transmembrane transport"/>
    <property type="evidence" value="ECO:0007669"/>
    <property type="project" value="TreeGrafter"/>
</dbReference>
<dbReference type="GO" id="GO:0043953">
    <property type="term" value="P:protein transport by the Tat complex"/>
    <property type="evidence" value="ECO:0007669"/>
    <property type="project" value="UniProtKB-UniRule"/>
</dbReference>
<dbReference type="HAMAP" id="MF_00902">
    <property type="entry name" value="TatC"/>
    <property type="match status" value="1"/>
</dbReference>
<dbReference type="InterPro" id="IPR002033">
    <property type="entry name" value="TatC"/>
</dbReference>
<dbReference type="NCBIfam" id="TIGR00945">
    <property type="entry name" value="tatC"/>
    <property type="match status" value="1"/>
</dbReference>
<dbReference type="PANTHER" id="PTHR30371">
    <property type="entry name" value="SEC-INDEPENDENT PROTEIN TRANSLOCASE PROTEIN TATC"/>
    <property type="match status" value="1"/>
</dbReference>
<dbReference type="PANTHER" id="PTHR30371:SF0">
    <property type="entry name" value="SEC-INDEPENDENT PROTEIN TRANSLOCASE PROTEIN TATC, CHLOROPLASTIC-RELATED"/>
    <property type="match status" value="1"/>
</dbReference>
<dbReference type="Pfam" id="PF00902">
    <property type="entry name" value="TatC"/>
    <property type="match status" value="1"/>
</dbReference>
<dbReference type="PRINTS" id="PR01840">
    <property type="entry name" value="TATCFAMILY"/>
</dbReference>
<comment type="function">
    <text evidence="1">Part of the twin-arginine translocation (Tat) system that transports large folded proteins containing a characteristic twin-arginine motif in their signal peptide across membranes.</text>
</comment>
<comment type="subunit">
    <text evidence="1">Forms a complex with TatA.</text>
</comment>
<comment type="subcellular location">
    <subcellularLocation>
        <location evidence="1">Cell inner membrane</location>
        <topology evidence="1">Multi-pass membrane protein</topology>
    </subcellularLocation>
</comment>
<comment type="similarity">
    <text evidence="1">Belongs to the TatC family.</text>
</comment>
<feature type="chain" id="PRO_0000412859" description="Sec-independent protein translocase protein TatC">
    <location>
        <begin position="1"/>
        <end position="266"/>
    </location>
</feature>
<feature type="transmembrane region" description="Helical" evidence="1">
    <location>
        <begin position="28"/>
        <end position="48"/>
    </location>
</feature>
<feature type="transmembrane region" description="Helical" evidence="1">
    <location>
        <begin position="93"/>
        <end position="113"/>
    </location>
</feature>
<feature type="transmembrane region" description="Helical" evidence="1">
    <location>
        <begin position="134"/>
        <end position="154"/>
    </location>
</feature>
<feature type="transmembrane region" description="Helical" evidence="1">
    <location>
        <begin position="183"/>
        <end position="203"/>
    </location>
</feature>
<feature type="transmembrane region" description="Helical" evidence="1">
    <location>
        <begin position="221"/>
        <end position="241"/>
    </location>
</feature>
<feature type="transmembrane region" description="Helical" evidence="1">
    <location>
        <begin position="242"/>
        <end position="262"/>
    </location>
</feature>
<evidence type="ECO:0000255" key="1">
    <source>
        <dbReference type="HAMAP-Rule" id="MF_00902"/>
    </source>
</evidence>
<proteinExistence type="inferred from homology"/>
<organism>
    <name type="scientific">Blattabacterium sp. subsp. Periplaneta americana (strain BPLAN)</name>
    <name type="common">Periplaneta americana symbiotic bacterium</name>
    <dbReference type="NCBI Taxonomy" id="600809"/>
    <lineage>
        <taxon>Bacteria</taxon>
        <taxon>Pseudomonadati</taxon>
        <taxon>Bacteroidota</taxon>
        <taxon>Flavobacteriia</taxon>
        <taxon>Flavobacteriales</taxon>
        <taxon>Blattabacteriaceae</taxon>
        <taxon>Blattabacterium</taxon>
    </lineage>
</organism>
<keyword id="KW-0997">Cell inner membrane</keyword>
<keyword id="KW-1003">Cell membrane</keyword>
<keyword id="KW-0472">Membrane</keyword>
<keyword id="KW-0653">Protein transport</keyword>
<keyword id="KW-1185">Reference proteome</keyword>
<keyword id="KW-0811">Translocation</keyword>
<keyword id="KW-0812">Transmembrane</keyword>
<keyword id="KW-1133">Transmembrane helix</keyword>
<keyword id="KW-0813">Transport</keyword>
<reference key="1">
    <citation type="journal article" date="2009" name="Proc. Natl. Acad. Sci. U.S.A.">
        <title>Nitrogen recycling and nutritional provisioning by Blattabacterium, the cockroach endosymbiont.</title>
        <authorList>
            <person name="Sabree Z.L."/>
            <person name="Kambhampati S."/>
            <person name="Moran N.A."/>
        </authorList>
    </citation>
    <scope>NUCLEOTIDE SEQUENCE [LARGE SCALE GENOMIC DNA]</scope>
    <source>
        <strain>BPLAN</strain>
    </source>
</reference>
<protein>
    <recommendedName>
        <fullName evidence="1">Sec-independent protein translocase protein TatC</fullName>
    </recommendedName>
</protein>
<sequence length="266" mass="31806">MKNEKNEMPFWEHIEELRKHLIHSVCAMIIATIILMNNKNVIFDYILFGPAKTDFITYRLFHKLGKIFHRSHHSFYFFSHNLEIQNRQIFGQFNIYVWTCFIGGFILSFPYIFYEFWKFIKPALSDEERKYSRGIIMMVTFLFILGVLFGYFILCPFLIHFGYTFRISSFPRNIFDLSDYISLIMHSILSMGITFLFPIFIYFLTKIELISYPFLKKYRKHAFLILLILASAITPGDIFSTIVVLIPLMILYQFSIYISFYVSKKK</sequence>